<proteinExistence type="inferred from homology"/>
<evidence type="ECO:0000255" key="1">
    <source>
        <dbReference type="HAMAP-Rule" id="MF_01843"/>
    </source>
</evidence>
<evidence type="ECO:0000305" key="2"/>
<accession>Q7V1W1</accession>
<organism>
    <name type="scientific">Prochlorococcus marinus subsp. pastoris (strain CCMP1986 / NIES-2087 / MED4)</name>
    <dbReference type="NCBI Taxonomy" id="59919"/>
    <lineage>
        <taxon>Bacteria</taxon>
        <taxon>Bacillati</taxon>
        <taxon>Cyanobacteriota</taxon>
        <taxon>Cyanophyceae</taxon>
        <taxon>Synechococcales</taxon>
        <taxon>Prochlorococcaceae</taxon>
        <taxon>Prochlorococcus</taxon>
    </lineage>
</organism>
<gene>
    <name evidence="1" type="primary">thf1</name>
    <name type="ordered locus">PMM0741</name>
</gene>
<sequence>MKEKLTVSDSKKLFHEQFPYVIPGLYKRIVDEMLVELNLLNHQNEFIQDDLFCVGLTETFKELTKGYKPEEHLRVLFESLCNSSNFEPKKIKEASKKTLEVYKDKSLKEISILLKQKSDSNLYSSRILNLGIYLIIANATDFKDIKDPEKNKIISDIINKLNLSFNKAEKDIGIYKSSILKMEQAKELLQEAKIKDKKEKKK</sequence>
<reference key="1">
    <citation type="journal article" date="2003" name="Nature">
        <title>Genome divergence in two Prochlorococcus ecotypes reflects oceanic niche differentiation.</title>
        <authorList>
            <person name="Rocap G."/>
            <person name="Larimer F.W."/>
            <person name="Lamerdin J.E."/>
            <person name="Malfatti S."/>
            <person name="Chain P."/>
            <person name="Ahlgren N.A."/>
            <person name="Arellano A."/>
            <person name="Coleman M."/>
            <person name="Hauser L."/>
            <person name="Hess W.R."/>
            <person name="Johnson Z.I."/>
            <person name="Land M.L."/>
            <person name="Lindell D."/>
            <person name="Post A.F."/>
            <person name="Regala W."/>
            <person name="Shah M."/>
            <person name="Shaw S.L."/>
            <person name="Steglich C."/>
            <person name="Sullivan M.B."/>
            <person name="Ting C.S."/>
            <person name="Tolonen A."/>
            <person name="Webb E.A."/>
            <person name="Zinser E.R."/>
            <person name="Chisholm S.W."/>
        </authorList>
    </citation>
    <scope>NUCLEOTIDE SEQUENCE [LARGE SCALE GENOMIC DNA]</scope>
    <source>
        <strain>CCMP1986 / NIES-2087 / MED4</strain>
    </source>
</reference>
<comment type="function">
    <text evidence="1">May be involved in photosynthetic membrane biogenesis.</text>
</comment>
<comment type="similarity">
    <text evidence="1">Belongs to the THF1 family.</text>
</comment>
<comment type="sequence caution" evidence="2">
    <conflict type="erroneous initiation">
        <sequence resource="EMBL-CDS" id="CAE19200"/>
    </conflict>
</comment>
<keyword id="KW-0175">Coiled coil</keyword>
<feature type="chain" id="PRO_0000235216" description="Protein Thf1">
    <location>
        <begin position="1"/>
        <end position="202"/>
    </location>
</feature>
<feature type="coiled-coil region" evidence="1">
    <location>
        <begin position="174"/>
        <end position="202"/>
    </location>
</feature>
<protein>
    <recommendedName>
        <fullName evidence="1">Protein Thf1</fullName>
    </recommendedName>
</protein>
<dbReference type="EMBL" id="BX548174">
    <property type="protein sequence ID" value="CAE19200.1"/>
    <property type="status" value="ALT_INIT"/>
    <property type="molecule type" value="Genomic_DNA"/>
</dbReference>
<dbReference type="SMR" id="Q7V1W1"/>
<dbReference type="STRING" id="59919.PMM0741"/>
<dbReference type="DNASU" id="1726810"/>
<dbReference type="KEGG" id="pmm:PMM0741"/>
<dbReference type="eggNOG" id="ENOG5033PEZ">
    <property type="taxonomic scope" value="Bacteria"/>
</dbReference>
<dbReference type="HOGENOM" id="CLU_079763_1_0_3"/>
<dbReference type="Proteomes" id="UP000001026">
    <property type="component" value="Chromosome"/>
</dbReference>
<dbReference type="GO" id="GO:0030096">
    <property type="term" value="C:plasma membrane-derived thylakoid photosystem II"/>
    <property type="evidence" value="ECO:0007669"/>
    <property type="project" value="TreeGrafter"/>
</dbReference>
<dbReference type="GO" id="GO:0010207">
    <property type="term" value="P:photosystem II assembly"/>
    <property type="evidence" value="ECO:0007669"/>
    <property type="project" value="InterPro"/>
</dbReference>
<dbReference type="HAMAP" id="MF_01843">
    <property type="entry name" value="Thf1"/>
    <property type="match status" value="1"/>
</dbReference>
<dbReference type="InterPro" id="IPR017499">
    <property type="entry name" value="Thf1"/>
</dbReference>
<dbReference type="NCBIfam" id="TIGR03060">
    <property type="entry name" value="PS_II_psb29"/>
    <property type="match status" value="1"/>
</dbReference>
<dbReference type="PANTHER" id="PTHR34793">
    <property type="entry name" value="PROTEIN THYLAKOID FORMATION 1, CHLOROPLASTIC"/>
    <property type="match status" value="1"/>
</dbReference>
<dbReference type="PANTHER" id="PTHR34793:SF1">
    <property type="entry name" value="PROTEIN THYLAKOID FORMATION 1, CHLOROPLASTIC"/>
    <property type="match status" value="1"/>
</dbReference>
<dbReference type="Pfam" id="PF11264">
    <property type="entry name" value="ThylakoidFormat"/>
    <property type="match status" value="1"/>
</dbReference>
<name>THF1_PROMP</name>